<gene>
    <name evidence="1" type="primary">plsY</name>
    <name type="ordered locus">LVIS_0803</name>
</gene>
<name>PLSY_LEVBA</name>
<sequence length="207" mass="22589">MKLIGLLIVAYLLGAIPNGVWVGKAFFQTDIRQAGSGNIGTTNTYRVLGPYAGTIVMVLDIAKGSVATLLPIVFHVQTVLGTATPLLFGLFAVLGHTVSIFDHFKGGKAVATSAGMLLAYNPIMFVIAAGFWVSLIYWTSIVSLASMIAFTLITLISLVFQDWYLTGIALVLTVFVFYRHRSNIQRIRQGTESMVPFGRGYHRRQAK</sequence>
<evidence type="ECO:0000255" key="1">
    <source>
        <dbReference type="HAMAP-Rule" id="MF_01043"/>
    </source>
</evidence>
<protein>
    <recommendedName>
        <fullName evidence="1">Glycerol-3-phosphate acyltransferase</fullName>
    </recommendedName>
    <alternativeName>
        <fullName evidence="1">Acyl-PO4 G3P acyltransferase</fullName>
    </alternativeName>
    <alternativeName>
        <fullName evidence="1">Acyl-phosphate--glycerol-3-phosphate acyltransferase</fullName>
    </alternativeName>
    <alternativeName>
        <fullName evidence="1">G3P acyltransferase</fullName>
        <shortName evidence="1">GPAT</shortName>
        <ecNumber evidence="1">2.3.1.275</ecNumber>
    </alternativeName>
    <alternativeName>
        <fullName evidence="1">Lysophosphatidic acid synthase</fullName>
        <shortName evidence="1">LPA synthase</shortName>
    </alternativeName>
</protein>
<comment type="function">
    <text evidence="1">Catalyzes the transfer of an acyl group from acyl-phosphate (acyl-PO(4)) to glycerol-3-phosphate (G3P) to form lysophosphatidic acid (LPA). This enzyme utilizes acyl-phosphate as fatty acyl donor, but not acyl-CoA or acyl-ACP.</text>
</comment>
<comment type="catalytic activity">
    <reaction evidence="1">
        <text>an acyl phosphate + sn-glycerol 3-phosphate = a 1-acyl-sn-glycero-3-phosphate + phosphate</text>
        <dbReference type="Rhea" id="RHEA:34075"/>
        <dbReference type="ChEBI" id="CHEBI:43474"/>
        <dbReference type="ChEBI" id="CHEBI:57597"/>
        <dbReference type="ChEBI" id="CHEBI:57970"/>
        <dbReference type="ChEBI" id="CHEBI:59918"/>
        <dbReference type="EC" id="2.3.1.275"/>
    </reaction>
</comment>
<comment type="pathway">
    <text evidence="1">Lipid metabolism; phospholipid metabolism.</text>
</comment>
<comment type="subunit">
    <text evidence="1">Probably interacts with PlsX.</text>
</comment>
<comment type="subcellular location">
    <subcellularLocation>
        <location evidence="1">Cell membrane</location>
        <topology evidence="1">Multi-pass membrane protein</topology>
    </subcellularLocation>
</comment>
<comment type="similarity">
    <text evidence="1">Belongs to the PlsY family.</text>
</comment>
<feature type="chain" id="PRO_1000064187" description="Glycerol-3-phosphate acyltransferase">
    <location>
        <begin position="1"/>
        <end position="207"/>
    </location>
</feature>
<feature type="transmembrane region" description="Helical" evidence="1">
    <location>
        <begin position="3"/>
        <end position="23"/>
    </location>
</feature>
<feature type="transmembrane region" description="Helical" evidence="1">
    <location>
        <begin position="54"/>
        <end position="74"/>
    </location>
</feature>
<feature type="transmembrane region" description="Helical" evidence="1">
    <location>
        <begin position="81"/>
        <end position="101"/>
    </location>
</feature>
<feature type="transmembrane region" description="Helical" evidence="1">
    <location>
        <begin position="122"/>
        <end position="142"/>
    </location>
</feature>
<feature type="transmembrane region" description="Helical" evidence="1">
    <location>
        <begin position="158"/>
        <end position="178"/>
    </location>
</feature>
<dbReference type="EC" id="2.3.1.275" evidence="1"/>
<dbReference type="EMBL" id="CP000416">
    <property type="protein sequence ID" value="ABJ63946.1"/>
    <property type="molecule type" value="Genomic_DNA"/>
</dbReference>
<dbReference type="RefSeq" id="WP_011667577.1">
    <property type="nucleotide sequence ID" value="NC_008497.1"/>
</dbReference>
<dbReference type="SMR" id="Q03S76"/>
<dbReference type="STRING" id="387344.LVIS_0803"/>
<dbReference type="KEGG" id="lbr:LVIS_0803"/>
<dbReference type="PATRIC" id="fig|387344.15.peg.776"/>
<dbReference type="eggNOG" id="COG0344">
    <property type="taxonomic scope" value="Bacteria"/>
</dbReference>
<dbReference type="HOGENOM" id="CLU_081254_4_0_9"/>
<dbReference type="UniPathway" id="UPA00085"/>
<dbReference type="Proteomes" id="UP000001652">
    <property type="component" value="Chromosome"/>
</dbReference>
<dbReference type="GO" id="GO:0005886">
    <property type="term" value="C:plasma membrane"/>
    <property type="evidence" value="ECO:0007669"/>
    <property type="project" value="UniProtKB-SubCell"/>
</dbReference>
<dbReference type="GO" id="GO:0043772">
    <property type="term" value="F:acyl-phosphate glycerol-3-phosphate acyltransferase activity"/>
    <property type="evidence" value="ECO:0007669"/>
    <property type="project" value="UniProtKB-UniRule"/>
</dbReference>
<dbReference type="GO" id="GO:0008654">
    <property type="term" value="P:phospholipid biosynthetic process"/>
    <property type="evidence" value="ECO:0007669"/>
    <property type="project" value="UniProtKB-UniRule"/>
</dbReference>
<dbReference type="HAMAP" id="MF_01043">
    <property type="entry name" value="PlsY"/>
    <property type="match status" value="1"/>
</dbReference>
<dbReference type="InterPro" id="IPR003811">
    <property type="entry name" value="G3P_acylTferase_PlsY"/>
</dbReference>
<dbReference type="NCBIfam" id="TIGR00023">
    <property type="entry name" value="glycerol-3-phosphate 1-O-acyltransferase PlsY"/>
    <property type="match status" value="1"/>
</dbReference>
<dbReference type="PANTHER" id="PTHR30309:SF0">
    <property type="entry name" value="GLYCEROL-3-PHOSPHATE ACYLTRANSFERASE-RELATED"/>
    <property type="match status" value="1"/>
</dbReference>
<dbReference type="PANTHER" id="PTHR30309">
    <property type="entry name" value="INNER MEMBRANE PROTEIN YGIH"/>
    <property type="match status" value="1"/>
</dbReference>
<dbReference type="Pfam" id="PF02660">
    <property type="entry name" value="G3P_acyltransf"/>
    <property type="match status" value="1"/>
</dbReference>
<dbReference type="SMART" id="SM01207">
    <property type="entry name" value="G3P_acyltransf"/>
    <property type="match status" value="1"/>
</dbReference>
<keyword id="KW-1003">Cell membrane</keyword>
<keyword id="KW-0444">Lipid biosynthesis</keyword>
<keyword id="KW-0443">Lipid metabolism</keyword>
<keyword id="KW-0472">Membrane</keyword>
<keyword id="KW-0594">Phospholipid biosynthesis</keyword>
<keyword id="KW-1208">Phospholipid metabolism</keyword>
<keyword id="KW-1185">Reference proteome</keyword>
<keyword id="KW-0808">Transferase</keyword>
<keyword id="KW-0812">Transmembrane</keyword>
<keyword id="KW-1133">Transmembrane helix</keyword>
<proteinExistence type="inferred from homology"/>
<organism>
    <name type="scientific">Levilactobacillus brevis (strain ATCC 367 / BCRC 12310 / CIP 105137 / JCM 1170 / LMG 11437 / NCIMB 947 / NCTC 947)</name>
    <name type="common">Lactobacillus brevis</name>
    <dbReference type="NCBI Taxonomy" id="387344"/>
    <lineage>
        <taxon>Bacteria</taxon>
        <taxon>Bacillati</taxon>
        <taxon>Bacillota</taxon>
        <taxon>Bacilli</taxon>
        <taxon>Lactobacillales</taxon>
        <taxon>Lactobacillaceae</taxon>
        <taxon>Levilactobacillus</taxon>
    </lineage>
</organism>
<reference key="1">
    <citation type="journal article" date="2006" name="Proc. Natl. Acad. Sci. U.S.A.">
        <title>Comparative genomics of the lactic acid bacteria.</title>
        <authorList>
            <person name="Makarova K.S."/>
            <person name="Slesarev A."/>
            <person name="Wolf Y.I."/>
            <person name="Sorokin A."/>
            <person name="Mirkin B."/>
            <person name="Koonin E.V."/>
            <person name="Pavlov A."/>
            <person name="Pavlova N."/>
            <person name="Karamychev V."/>
            <person name="Polouchine N."/>
            <person name="Shakhova V."/>
            <person name="Grigoriev I."/>
            <person name="Lou Y."/>
            <person name="Rohksar D."/>
            <person name="Lucas S."/>
            <person name="Huang K."/>
            <person name="Goodstein D.M."/>
            <person name="Hawkins T."/>
            <person name="Plengvidhya V."/>
            <person name="Welker D."/>
            <person name="Hughes J."/>
            <person name="Goh Y."/>
            <person name="Benson A."/>
            <person name="Baldwin K."/>
            <person name="Lee J.-H."/>
            <person name="Diaz-Muniz I."/>
            <person name="Dosti B."/>
            <person name="Smeianov V."/>
            <person name="Wechter W."/>
            <person name="Barabote R."/>
            <person name="Lorca G."/>
            <person name="Altermann E."/>
            <person name="Barrangou R."/>
            <person name="Ganesan B."/>
            <person name="Xie Y."/>
            <person name="Rawsthorne H."/>
            <person name="Tamir D."/>
            <person name="Parker C."/>
            <person name="Breidt F."/>
            <person name="Broadbent J.R."/>
            <person name="Hutkins R."/>
            <person name="O'Sullivan D."/>
            <person name="Steele J."/>
            <person name="Unlu G."/>
            <person name="Saier M.H. Jr."/>
            <person name="Klaenhammer T."/>
            <person name="Richardson P."/>
            <person name="Kozyavkin S."/>
            <person name="Weimer B.C."/>
            <person name="Mills D.A."/>
        </authorList>
    </citation>
    <scope>NUCLEOTIDE SEQUENCE [LARGE SCALE GENOMIC DNA]</scope>
    <source>
        <strain>ATCC 367 / BCRC 12310 / CIP 105137 / JCM 1170 / LMG 11437 / NCIMB 947 / NCTC 947</strain>
    </source>
</reference>
<accession>Q03S76</accession>